<name>ANM7_DROER</name>
<sequence>MSCFSQAINPITGQNSWQERGDDYDYHLEVANAGFGDMLHDWERNQKYFAALKKTIAGMREAGREVHVLDIGTGTGILSMMAVEAGADSVTACEAFLPMANCAERILAANGAGDKVRLIRKRSTEIQVGEDMPRKANLLVAELLDTELIGEGAIGIYNHAHAELLTEDALCIPARARCYAQVAQSPLAAQWNSLKTIANLDGEPLLHPPEQLKSCQGEAALHDVQLSQLPSSAFRPLTDPVEIFQFDFQRKQEREKQRAQLLKLQSKQPGAAELVFYWWDIQLDDGGEILLSCAPYWAHPQLKELAAEKGNDHPLPNVVPWRDHWMQAIYYIPKPLQLVEAGKSFHLSCHHDEYSLWFDAREEAPTKSVRRHTCTCDLHMTYSRSRIGQINQSPRNKRYLRYLEESIEAEKSNVLVLGNGCLLGLASSALGAASVLLHEPHRFSRRLLESIVKHNQLKNVQFLDKVEELEDSQLAALTHIFAEPYFLNAILPWDNFYFGTLLTKIKDRLPQNVKISPCSARIYALPVEFLDLHKIRAPVGSCEGFDLRLFDEMVERSAEQAVSLVEAQPLWEYPCRALSEPQEVLNVEFSNFSQEHSLKGSIELKHSGTCNGVALWVDWQLVEDNSPRSIVSSGPSEPVVPGEFVKWDMFVRQGVHFPRRPKEPITHLEWSTAFKPELGELNFTFGQKKL</sequence>
<comment type="function">
    <text evidence="1">Essential arginine methyltransferase that can both catalyze the formation of omega-N monomethylarginine (MMA) and symmetrical dimethylarginine (sDMA). Specifically mediates the symmetrical dimethylation of arginine residues in the small nuclear ribonucleoproteins SmD1 and SmD3 (By similarity).</text>
</comment>
<comment type="similarity">
    <text evidence="2">Belongs to the class I-like SAM-binding methyltransferase superfamily. Protein arginine N-methyltransferase family. PRMT7 subfamily.</text>
</comment>
<organism>
    <name type="scientific">Drosophila erecta</name>
    <name type="common">Fruit fly</name>
    <dbReference type="NCBI Taxonomy" id="7220"/>
    <lineage>
        <taxon>Eukaryota</taxon>
        <taxon>Metazoa</taxon>
        <taxon>Ecdysozoa</taxon>
        <taxon>Arthropoda</taxon>
        <taxon>Hexapoda</taxon>
        <taxon>Insecta</taxon>
        <taxon>Pterygota</taxon>
        <taxon>Neoptera</taxon>
        <taxon>Endopterygota</taxon>
        <taxon>Diptera</taxon>
        <taxon>Brachycera</taxon>
        <taxon>Muscomorpha</taxon>
        <taxon>Ephydroidea</taxon>
        <taxon>Drosophilidae</taxon>
        <taxon>Drosophila</taxon>
        <taxon>Sophophora</taxon>
    </lineage>
</organism>
<feature type="chain" id="PRO_0000373912" description="Protein arginine N-methyltransferase 7">
    <location>
        <begin position="1"/>
        <end position="690"/>
    </location>
</feature>
<feature type="domain" description="SAM-dependent MTase PRMT-type 1" evidence="2">
    <location>
        <begin position="14"/>
        <end position="357"/>
    </location>
</feature>
<feature type="domain" description="SAM-dependent MTase PRMT-type 2" evidence="2">
    <location>
        <begin position="366"/>
        <end position="690"/>
    </location>
</feature>
<feature type="sequence conflict" description="In Ref. 1; AAO01020." evidence="3" ref="1">
    <original>V</original>
    <variation>I</variation>
    <location>
        <position position="339"/>
    </location>
</feature>
<feature type="sequence conflict" description="In Ref. 1; AAO01020." evidence="3" ref="1">
    <original>S</original>
    <variation>N</variation>
    <location>
        <position position="406"/>
    </location>
</feature>
<feature type="sequence conflict" description="In Ref. 1; AAO01020." evidence="3" ref="1">
    <original>Q</original>
    <variation>E</variation>
    <location>
        <position position="511"/>
    </location>
</feature>
<feature type="sequence conflict" description="In Ref. 1; AAO01020." evidence="3" ref="1">
    <original>S</original>
    <variation>G</variation>
    <location>
        <position position="593"/>
    </location>
</feature>
<protein>
    <recommendedName>
        <fullName>Protein arginine N-methyltransferase 7</fullName>
        <ecNumber>2.1.1.-</ecNumber>
    </recommendedName>
</protein>
<proteinExistence type="inferred from homology"/>
<dbReference type="EC" id="2.1.1.-"/>
<dbReference type="EMBL" id="AY190941">
    <property type="protein sequence ID" value="AAO01020.1"/>
    <property type="molecule type" value="Genomic_DNA"/>
</dbReference>
<dbReference type="EMBL" id="CH954179">
    <property type="protein sequence ID" value="EDV56743.1"/>
    <property type="molecule type" value="Genomic_DNA"/>
</dbReference>
<dbReference type="SMR" id="B3NP10"/>
<dbReference type="EnsemblMetazoa" id="FBtr0140125">
    <property type="protein sequence ID" value="FBpp0138617"/>
    <property type="gene ID" value="FBgn0064628"/>
</dbReference>
<dbReference type="EnsemblMetazoa" id="XM_001976307.3">
    <property type="protein sequence ID" value="XP_001976343.2"/>
    <property type="gene ID" value="LOC6547319"/>
</dbReference>
<dbReference type="GeneID" id="6547319"/>
<dbReference type="KEGG" id="der:6547319"/>
<dbReference type="CTD" id="37664"/>
<dbReference type="eggNOG" id="KOG1501">
    <property type="taxonomic scope" value="Eukaryota"/>
</dbReference>
<dbReference type="HOGENOM" id="CLU_015180_0_0_1"/>
<dbReference type="OMA" id="CHHDEYS"/>
<dbReference type="OrthoDB" id="412876at2759"/>
<dbReference type="PhylomeDB" id="B3NP10"/>
<dbReference type="Proteomes" id="UP000008711">
    <property type="component" value="Unassembled WGS sequence"/>
</dbReference>
<dbReference type="GO" id="GO:0042054">
    <property type="term" value="F:histone methyltransferase activity"/>
    <property type="evidence" value="ECO:0007669"/>
    <property type="project" value="TreeGrafter"/>
</dbReference>
<dbReference type="GO" id="GO:0035243">
    <property type="term" value="F:protein-arginine omega-N symmetric methyltransferase activity"/>
    <property type="evidence" value="ECO:0000250"/>
    <property type="project" value="UniProtKB"/>
</dbReference>
<dbReference type="GO" id="GO:0018216">
    <property type="term" value="P:peptidyl-arginine methylation"/>
    <property type="evidence" value="ECO:0000250"/>
    <property type="project" value="UniProtKB"/>
</dbReference>
<dbReference type="CDD" id="cd02440">
    <property type="entry name" value="AdoMet_MTases"/>
    <property type="match status" value="1"/>
</dbReference>
<dbReference type="FunFam" id="2.70.160.11:FF:000014">
    <property type="entry name" value="Protein arginine N-methyltransferase 7"/>
    <property type="match status" value="1"/>
</dbReference>
<dbReference type="FunFam" id="2.70.160.11:FF:000019">
    <property type="entry name" value="Protein arginine N-methyltransferase 7"/>
    <property type="match status" value="1"/>
</dbReference>
<dbReference type="FunFam" id="3.40.50.150:FF:000070">
    <property type="entry name" value="Protein arginine N-methyltransferase 7"/>
    <property type="match status" value="1"/>
</dbReference>
<dbReference type="FunFam" id="3.40.50.150:FF:000071">
    <property type="entry name" value="Protein arginine N-methyltransferase 7"/>
    <property type="match status" value="1"/>
</dbReference>
<dbReference type="Gene3D" id="2.70.160.11">
    <property type="entry name" value="Hnrnp arginine n-methyltransferase1"/>
    <property type="match status" value="2"/>
</dbReference>
<dbReference type="Gene3D" id="3.40.50.150">
    <property type="entry name" value="Vaccinia Virus protein VP39"/>
    <property type="match status" value="2"/>
</dbReference>
<dbReference type="InterPro" id="IPR025799">
    <property type="entry name" value="Arg_MeTrfase"/>
</dbReference>
<dbReference type="InterPro" id="IPR014644">
    <property type="entry name" value="MeTrfase_PRMT7"/>
</dbReference>
<dbReference type="InterPro" id="IPR055135">
    <property type="entry name" value="PRMT_dom"/>
</dbReference>
<dbReference type="InterPro" id="IPR029063">
    <property type="entry name" value="SAM-dependent_MTases_sf"/>
</dbReference>
<dbReference type="PANTHER" id="PTHR11006">
    <property type="entry name" value="PROTEIN ARGININE N-METHYLTRANSFERASE"/>
    <property type="match status" value="1"/>
</dbReference>
<dbReference type="PANTHER" id="PTHR11006:SF4">
    <property type="entry name" value="PROTEIN ARGININE N-METHYLTRANSFERASE 7"/>
    <property type="match status" value="1"/>
</dbReference>
<dbReference type="Pfam" id="PF06325">
    <property type="entry name" value="PrmA"/>
    <property type="match status" value="1"/>
</dbReference>
<dbReference type="Pfam" id="PF22528">
    <property type="entry name" value="PRMT_C"/>
    <property type="match status" value="2"/>
</dbReference>
<dbReference type="PIRSF" id="PIRSF036946">
    <property type="entry name" value="Arg_N-mtase"/>
    <property type="match status" value="1"/>
</dbReference>
<dbReference type="SUPFAM" id="SSF53335">
    <property type="entry name" value="S-adenosyl-L-methionine-dependent methyltransferases"/>
    <property type="match status" value="2"/>
</dbReference>
<dbReference type="PROSITE" id="PS51678">
    <property type="entry name" value="SAM_MT_PRMT"/>
    <property type="match status" value="2"/>
</dbReference>
<evidence type="ECO:0000250" key="1"/>
<evidence type="ECO:0000255" key="2">
    <source>
        <dbReference type="PROSITE-ProRule" id="PRU01015"/>
    </source>
</evidence>
<evidence type="ECO:0000305" key="3"/>
<keyword id="KW-0489">Methyltransferase</keyword>
<keyword id="KW-0677">Repeat</keyword>
<keyword id="KW-0949">S-adenosyl-L-methionine</keyword>
<keyword id="KW-0808">Transferase</keyword>
<reference key="1">
    <citation type="journal article" date="2002" name="Genome Biol.">
        <title>Assessing the impact of comparative genomic sequence data on the functional annotation of the Drosophila genome.</title>
        <authorList>
            <person name="Bergman C.M."/>
            <person name="Pfeiffer B.D."/>
            <person name="Rincon-Limas D.E."/>
            <person name="Hoskins R.A."/>
            <person name="Gnirke A."/>
            <person name="Mungall C.J."/>
            <person name="Wang A.M."/>
            <person name="Kronmiller B."/>
            <person name="Pacleb J.M."/>
            <person name="Park S."/>
            <person name="Stapleton M."/>
            <person name="Wan K.H."/>
            <person name="George R.A."/>
            <person name="de Jong P.J."/>
            <person name="Botas J."/>
            <person name="Rubin G.M."/>
            <person name="Celniker S.E."/>
        </authorList>
    </citation>
    <scope>NUCLEOTIDE SEQUENCE [GENOMIC DNA]</scope>
</reference>
<reference key="2">
    <citation type="journal article" date="2007" name="Nature">
        <title>Evolution of genes and genomes on the Drosophila phylogeny.</title>
        <authorList>
            <consortium name="Drosophila 12 genomes consortium"/>
        </authorList>
    </citation>
    <scope>NUCLEOTIDE SEQUENCE [LARGE SCALE GENOMIC DNA]</scope>
    <source>
        <strain>Tucson 14021-0224.01</strain>
    </source>
</reference>
<accession>B3NP10</accession>
<accession>Q8I1F2</accession>
<gene>
    <name type="primary">Art7</name>
    <name type="ORF">GG20071</name>
</gene>